<evidence type="ECO:0000250" key="1"/>
<evidence type="ECO:0000255" key="2">
    <source>
        <dbReference type="PROSITE-ProRule" id="PRU00711"/>
    </source>
</evidence>
<dbReference type="PIR" id="A00199">
    <property type="entry name" value="FECLCB"/>
</dbReference>
<dbReference type="SMR" id="P00196"/>
<dbReference type="GO" id="GO:0005737">
    <property type="term" value="C:cytoplasm"/>
    <property type="evidence" value="ECO:0007669"/>
    <property type="project" value="TreeGrafter"/>
</dbReference>
<dbReference type="GO" id="GO:0051539">
    <property type="term" value="F:4 iron, 4 sulfur cluster binding"/>
    <property type="evidence" value="ECO:0007669"/>
    <property type="project" value="UniProtKB-KW"/>
</dbReference>
<dbReference type="GO" id="GO:0009055">
    <property type="term" value="F:electron transfer activity"/>
    <property type="evidence" value="ECO:0007669"/>
    <property type="project" value="InterPro"/>
</dbReference>
<dbReference type="GO" id="GO:0046872">
    <property type="term" value="F:metal ion binding"/>
    <property type="evidence" value="ECO:0007669"/>
    <property type="project" value="UniProtKB-KW"/>
</dbReference>
<dbReference type="FunFam" id="3.30.70.20:FF:000045">
    <property type="entry name" value="Ferredoxin, 4Fe-4S"/>
    <property type="match status" value="1"/>
</dbReference>
<dbReference type="Gene3D" id="3.30.70.20">
    <property type="match status" value="1"/>
</dbReference>
<dbReference type="InterPro" id="IPR017896">
    <property type="entry name" value="4Fe4S_Fe-S-bd"/>
</dbReference>
<dbReference type="InterPro" id="IPR017900">
    <property type="entry name" value="4Fe4S_Fe_S_CS"/>
</dbReference>
<dbReference type="InterPro" id="IPR000813">
    <property type="entry name" value="7Fe_ferredoxin"/>
</dbReference>
<dbReference type="InterPro" id="IPR050157">
    <property type="entry name" value="PSI_iron-sulfur_center"/>
</dbReference>
<dbReference type="PANTHER" id="PTHR24960:SF79">
    <property type="entry name" value="PHOTOSYSTEM I IRON-SULFUR CENTER"/>
    <property type="match status" value="1"/>
</dbReference>
<dbReference type="PANTHER" id="PTHR24960">
    <property type="entry name" value="PHOTOSYSTEM I IRON-SULFUR CENTER-RELATED"/>
    <property type="match status" value="1"/>
</dbReference>
<dbReference type="Pfam" id="PF12838">
    <property type="entry name" value="Fer4_7"/>
    <property type="match status" value="1"/>
</dbReference>
<dbReference type="PRINTS" id="PR00354">
    <property type="entry name" value="7FE8SFRDOXIN"/>
</dbReference>
<dbReference type="SUPFAM" id="SSF54862">
    <property type="entry name" value="4Fe-4S ferredoxins"/>
    <property type="match status" value="1"/>
</dbReference>
<dbReference type="PROSITE" id="PS00198">
    <property type="entry name" value="4FE4S_FER_1"/>
    <property type="match status" value="2"/>
</dbReference>
<dbReference type="PROSITE" id="PS51379">
    <property type="entry name" value="4FE4S_FER_2"/>
    <property type="match status" value="2"/>
</dbReference>
<comment type="function">
    <text>Ferredoxins are iron-sulfur proteins that transfer electrons in a wide variety of metabolic reactions.</text>
</comment>
<comment type="cofactor">
    <cofactor>
        <name>[4Fe-4S] cluster</name>
        <dbReference type="ChEBI" id="CHEBI:49883"/>
    </cofactor>
    <text>Binds 2 [4Fe-4S] clusters.</text>
</comment>
<feature type="chain" id="PRO_0000159110" description="Ferredoxin">
    <location>
        <begin position="1"/>
        <end position="55"/>
    </location>
</feature>
<feature type="domain" description="4Fe-4S ferredoxin-type 1" evidence="2">
    <location>
        <begin position="2"/>
        <end position="27"/>
    </location>
</feature>
<feature type="domain" description="4Fe-4S ferredoxin-type 2" evidence="2">
    <location>
        <begin position="28"/>
        <end position="55"/>
    </location>
</feature>
<feature type="binding site" evidence="1">
    <location>
        <position position="8"/>
    </location>
    <ligand>
        <name>[4Fe-4S] cluster</name>
        <dbReference type="ChEBI" id="CHEBI:49883"/>
        <label>1</label>
    </ligand>
</feature>
<feature type="binding site" evidence="1">
    <location>
        <position position="11"/>
    </location>
    <ligand>
        <name>[4Fe-4S] cluster</name>
        <dbReference type="ChEBI" id="CHEBI:49883"/>
        <label>1</label>
    </ligand>
</feature>
<feature type="binding site" evidence="1">
    <location>
        <position position="14"/>
    </location>
    <ligand>
        <name>[4Fe-4S] cluster</name>
        <dbReference type="ChEBI" id="CHEBI:49883"/>
        <label>1</label>
    </ligand>
</feature>
<feature type="binding site" evidence="1">
    <location>
        <position position="18"/>
    </location>
    <ligand>
        <name>[4Fe-4S] cluster</name>
        <dbReference type="ChEBI" id="CHEBI:49883"/>
        <label>2</label>
    </ligand>
</feature>
<feature type="binding site" evidence="1">
    <location>
        <position position="37"/>
    </location>
    <ligand>
        <name>[4Fe-4S] cluster</name>
        <dbReference type="ChEBI" id="CHEBI:49883"/>
        <label>2</label>
    </ligand>
</feature>
<feature type="binding site" evidence="1">
    <location>
        <position position="40"/>
    </location>
    <ligand>
        <name>[4Fe-4S] cluster</name>
        <dbReference type="ChEBI" id="CHEBI:49883"/>
        <label>2</label>
    </ligand>
</feature>
<feature type="binding site" evidence="1">
    <location>
        <position position="43"/>
    </location>
    <ligand>
        <name>[4Fe-4S] cluster</name>
        <dbReference type="ChEBI" id="CHEBI:49883"/>
        <label>2</label>
    </ligand>
</feature>
<feature type="binding site" evidence="1">
    <location>
        <position position="47"/>
    </location>
    <ligand>
        <name>[4Fe-4S] cluster</name>
        <dbReference type="ChEBI" id="CHEBI:49883"/>
        <label>1</label>
    </ligand>
</feature>
<sequence>AFVINDSCVSCGACAGECPVSAITQGDTQFVIDADTCIDCGNCANVCPVGAPNQE</sequence>
<name>FER_CLOBU</name>
<keyword id="KW-0004">4Fe-4S</keyword>
<keyword id="KW-0903">Direct protein sequencing</keyword>
<keyword id="KW-0249">Electron transport</keyword>
<keyword id="KW-0408">Iron</keyword>
<keyword id="KW-0411">Iron-sulfur</keyword>
<keyword id="KW-0479">Metal-binding</keyword>
<keyword id="KW-0677">Repeat</keyword>
<keyword id="KW-0813">Transport</keyword>
<proteinExistence type="evidence at protein level"/>
<reference key="1">
    <citation type="journal article" date="1966" name="Proc. Natl. Acad. Sci. U.S.A.">
        <title>The amino acid sequence of Clostridium butyricum ferredoxin.</title>
        <authorList>
            <person name="Benson A.M."/>
            <person name="Mower H.F."/>
            <person name="Yasunobu K.T."/>
        </authorList>
    </citation>
    <scope>PROTEIN SEQUENCE</scope>
</reference>
<protein>
    <recommendedName>
        <fullName>Ferredoxin</fullName>
    </recommendedName>
</protein>
<accession>P00196</accession>
<organism>
    <name type="scientific">Clostridium butyricum</name>
    <dbReference type="NCBI Taxonomy" id="1492"/>
    <lineage>
        <taxon>Bacteria</taxon>
        <taxon>Bacillati</taxon>
        <taxon>Bacillota</taxon>
        <taxon>Clostridia</taxon>
        <taxon>Eubacteriales</taxon>
        <taxon>Clostridiaceae</taxon>
        <taxon>Clostridium</taxon>
    </lineage>
</organism>